<gene>
    <name evidence="1" type="primary">aat</name>
    <name type="ordered locus">Avi_1786</name>
</gene>
<comment type="function">
    <text evidence="1">Functions in the N-end rule pathway of protein degradation where it conjugates Leu, Phe and, less efficiently, Met from aminoacyl-tRNAs to the N-termini of proteins containing an N-terminal arginine or lysine.</text>
</comment>
<comment type="catalytic activity">
    <reaction evidence="1">
        <text>N-terminal L-lysyl-[protein] + L-leucyl-tRNA(Leu) = N-terminal L-leucyl-L-lysyl-[protein] + tRNA(Leu) + H(+)</text>
        <dbReference type="Rhea" id="RHEA:12340"/>
        <dbReference type="Rhea" id="RHEA-COMP:9613"/>
        <dbReference type="Rhea" id="RHEA-COMP:9622"/>
        <dbReference type="Rhea" id="RHEA-COMP:12670"/>
        <dbReference type="Rhea" id="RHEA-COMP:12671"/>
        <dbReference type="ChEBI" id="CHEBI:15378"/>
        <dbReference type="ChEBI" id="CHEBI:65249"/>
        <dbReference type="ChEBI" id="CHEBI:78442"/>
        <dbReference type="ChEBI" id="CHEBI:78494"/>
        <dbReference type="ChEBI" id="CHEBI:133043"/>
        <dbReference type="EC" id="2.3.2.6"/>
    </reaction>
</comment>
<comment type="catalytic activity">
    <reaction evidence="1">
        <text>N-terminal L-arginyl-[protein] + L-leucyl-tRNA(Leu) = N-terminal L-leucyl-L-arginyl-[protein] + tRNA(Leu) + H(+)</text>
        <dbReference type="Rhea" id="RHEA:50416"/>
        <dbReference type="Rhea" id="RHEA-COMP:9613"/>
        <dbReference type="Rhea" id="RHEA-COMP:9622"/>
        <dbReference type="Rhea" id="RHEA-COMP:12672"/>
        <dbReference type="Rhea" id="RHEA-COMP:12673"/>
        <dbReference type="ChEBI" id="CHEBI:15378"/>
        <dbReference type="ChEBI" id="CHEBI:64719"/>
        <dbReference type="ChEBI" id="CHEBI:78442"/>
        <dbReference type="ChEBI" id="CHEBI:78494"/>
        <dbReference type="ChEBI" id="CHEBI:133044"/>
        <dbReference type="EC" id="2.3.2.6"/>
    </reaction>
</comment>
<comment type="catalytic activity">
    <reaction evidence="1">
        <text>L-phenylalanyl-tRNA(Phe) + an N-terminal L-alpha-aminoacyl-[protein] = an N-terminal L-phenylalanyl-L-alpha-aminoacyl-[protein] + tRNA(Phe)</text>
        <dbReference type="Rhea" id="RHEA:43632"/>
        <dbReference type="Rhea" id="RHEA-COMP:9668"/>
        <dbReference type="Rhea" id="RHEA-COMP:9699"/>
        <dbReference type="Rhea" id="RHEA-COMP:10636"/>
        <dbReference type="Rhea" id="RHEA-COMP:10637"/>
        <dbReference type="ChEBI" id="CHEBI:78442"/>
        <dbReference type="ChEBI" id="CHEBI:78531"/>
        <dbReference type="ChEBI" id="CHEBI:78597"/>
        <dbReference type="ChEBI" id="CHEBI:83561"/>
        <dbReference type="EC" id="2.3.2.6"/>
    </reaction>
</comment>
<comment type="subcellular location">
    <subcellularLocation>
        <location evidence="1">Cytoplasm</location>
    </subcellularLocation>
</comment>
<comment type="similarity">
    <text evidence="1">Belongs to the L/F-transferase family.</text>
</comment>
<name>LFTR_ALLAM</name>
<protein>
    <recommendedName>
        <fullName evidence="1">Leucyl/phenylalanyl-tRNA--protein transferase</fullName>
        <ecNumber evidence="1">2.3.2.6</ecNumber>
    </recommendedName>
    <alternativeName>
        <fullName evidence="1">L/F-transferase</fullName>
    </alternativeName>
    <alternativeName>
        <fullName evidence="1">Leucyltransferase</fullName>
    </alternativeName>
    <alternativeName>
        <fullName evidence="1">Phenyalanyltransferase</fullName>
    </alternativeName>
</protein>
<dbReference type="EC" id="2.3.2.6" evidence="1"/>
<dbReference type="EMBL" id="CP000633">
    <property type="protein sequence ID" value="ACM36282.1"/>
    <property type="molecule type" value="Genomic_DNA"/>
</dbReference>
<dbReference type="RefSeq" id="WP_015915705.1">
    <property type="nucleotide sequence ID" value="NC_011989.1"/>
</dbReference>
<dbReference type="SMR" id="B9JVK2"/>
<dbReference type="STRING" id="311402.Avi_1786"/>
<dbReference type="KEGG" id="avi:Avi_1786"/>
<dbReference type="eggNOG" id="COG2360">
    <property type="taxonomic scope" value="Bacteria"/>
</dbReference>
<dbReference type="HOGENOM" id="CLU_075045_1_1_5"/>
<dbReference type="Proteomes" id="UP000001596">
    <property type="component" value="Chromosome 1"/>
</dbReference>
<dbReference type="GO" id="GO:0005737">
    <property type="term" value="C:cytoplasm"/>
    <property type="evidence" value="ECO:0007669"/>
    <property type="project" value="UniProtKB-SubCell"/>
</dbReference>
<dbReference type="GO" id="GO:0008914">
    <property type="term" value="F:leucyl-tRNA--protein transferase activity"/>
    <property type="evidence" value="ECO:0007669"/>
    <property type="project" value="UniProtKB-UniRule"/>
</dbReference>
<dbReference type="GO" id="GO:0030163">
    <property type="term" value="P:protein catabolic process"/>
    <property type="evidence" value="ECO:0007669"/>
    <property type="project" value="UniProtKB-UniRule"/>
</dbReference>
<dbReference type="FunFam" id="3.40.630.70:FF:000001">
    <property type="entry name" value="Leucyl/phenylalanyl-tRNA--protein transferase"/>
    <property type="match status" value="1"/>
</dbReference>
<dbReference type="Gene3D" id="3.40.630.70">
    <property type="entry name" value="Leucyl/phenylalanyl-tRNA-protein transferase, C-terminal domain"/>
    <property type="match status" value="1"/>
</dbReference>
<dbReference type="HAMAP" id="MF_00688">
    <property type="entry name" value="Leu_Phe_trans"/>
    <property type="match status" value="1"/>
</dbReference>
<dbReference type="InterPro" id="IPR016181">
    <property type="entry name" value="Acyl_CoA_acyltransferase"/>
</dbReference>
<dbReference type="InterPro" id="IPR004616">
    <property type="entry name" value="Leu/Phe-tRNA_Trfase"/>
</dbReference>
<dbReference type="InterPro" id="IPR042203">
    <property type="entry name" value="Leu/Phe-tRNA_Trfase_C"/>
</dbReference>
<dbReference type="NCBIfam" id="TIGR00667">
    <property type="entry name" value="aat"/>
    <property type="match status" value="1"/>
</dbReference>
<dbReference type="PANTHER" id="PTHR30098">
    <property type="entry name" value="LEUCYL/PHENYLALANYL-TRNA--PROTEIN TRANSFERASE"/>
    <property type="match status" value="1"/>
</dbReference>
<dbReference type="PANTHER" id="PTHR30098:SF2">
    <property type="entry name" value="LEUCYL_PHENYLALANYL-TRNA--PROTEIN TRANSFERASE"/>
    <property type="match status" value="1"/>
</dbReference>
<dbReference type="Pfam" id="PF03588">
    <property type="entry name" value="Leu_Phe_trans"/>
    <property type="match status" value="1"/>
</dbReference>
<dbReference type="SUPFAM" id="SSF55729">
    <property type="entry name" value="Acyl-CoA N-acyltransferases (Nat)"/>
    <property type="match status" value="1"/>
</dbReference>
<evidence type="ECO:0000255" key="1">
    <source>
        <dbReference type="HAMAP-Rule" id="MF_00688"/>
    </source>
</evidence>
<organism>
    <name type="scientific">Allorhizobium ampelinum (strain ATCC BAA-846 / DSM 112012 / S4)</name>
    <name type="common">Agrobacterium vitis (strain S4)</name>
    <dbReference type="NCBI Taxonomy" id="311402"/>
    <lineage>
        <taxon>Bacteria</taxon>
        <taxon>Pseudomonadati</taxon>
        <taxon>Pseudomonadota</taxon>
        <taxon>Alphaproteobacteria</taxon>
        <taxon>Hyphomicrobiales</taxon>
        <taxon>Rhizobiaceae</taxon>
        <taxon>Rhizobium/Agrobacterium group</taxon>
        <taxon>Allorhizobium</taxon>
        <taxon>Allorhizobium ampelinum</taxon>
    </lineage>
</organism>
<reference key="1">
    <citation type="journal article" date="2009" name="J. Bacteriol.">
        <title>Genome sequences of three Agrobacterium biovars help elucidate the evolution of multichromosome genomes in bacteria.</title>
        <authorList>
            <person name="Slater S.C."/>
            <person name="Goldman B.S."/>
            <person name="Goodner B."/>
            <person name="Setubal J.C."/>
            <person name="Farrand S.K."/>
            <person name="Nester E.W."/>
            <person name="Burr T.J."/>
            <person name="Banta L."/>
            <person name="Dickerman A.W."/>
            <person name="Paulsen I."/>
            <person name="Otten L."/>
            <person name="Suen G."/>
            <person name="Welch R."/>
            <person name="Almeida N.F."/>
            <person name="Arnold F."/>
            <person name="Burton O.T."/>
            <person name="Du Z."/>
            <person name="Ewing A."/>
            <person name="Godsy E."/>
            <person name="Heisel S."/>
            <person name="Houmiel K.L."/>
            <person name="Jhaveri J."/>
            <person name="Lu J."/>
            <person name="Miller N.M."/>
            <person name="Norton S."/>
            <person name="Chen Q."/>
            <person name="Phoolcharoen W."/>
            <person name="Ohlin V."/>
            <person name="Ondrusek D."/>
            <person name="Pride N."/>
            <person name="Stricklin S.L."/>
            <person name="Sun J."/>
            <person name="Wheeler C."/>
            <person name="Wilson L."/>
            <person name="Zhu H."/>
            <person name="Wood D.W."/>
        </authorList>
    </citation>
    <scope>NUCLEOTIDE SEQUENCE [LARGE SCALE GENOMIC DNA]</scope>
    <source>
        <strain>ATCC BAA-846 / DSM 112012 / S4</strain>
    </source>
</reference>
<feature type="chain" id="PRO_1000147784" description="Leucyl/phenylalanyl-tRNA--protein transferase">
    <location>
        <begin position="1"/>
        <end position="212"/>
    </location>
</feature>
<accession>B9JVK2</accession>
<proteinExistence type="inferred from homology"/>
<keyword id="KW-0012">Acyltransferase</keyword>
<keyword id="KW-0963">Cytoplasm</keyword>
<keyword id="KW-1185">Reference proteome</keyword>
<keyword id="KW-0808">Transferase</keyword>
<sequence length="212" mass="23753">MGRRSSKDRSITPDILLRAYSIGLFPMAESSDDPELFWVEPDLRGIIPLDSFHYSKSLAKIIRQKPFDIRFDTAFAAVLDKCAEPAPDRPSTWINQTIRDLYTALFQMGHAHSVEAFEGDELVGGLYGVSLGAAFFGESMFSRRSNASKICLVHLVERLRAQGFVLLDTQFTTEHLKTFGAIDVAKDEYSKMLEEAVTMANVPFLLPEEISP</sequence>